<dbReference type="EMBL" id="GG704911">
    <property type="protein sequence ID" value="EAS35978.3"/>
    <property type="molecule type" value="Genomic_DNA"/>
</dbReference>
<dbReference type="RefSeq" id="XP_001247561.1">
    <property type="nucleotide sequence ID" value="XM_001247560.2"/>
</dbReference>
<dbReference type="SMR" id="Q1E7Y1"/>
<dbReference type="FunCoup" id="Q1E7Y1">
    <property type="interactions" value="89"/>
</dbReference>
<dbReference type="STRING" id="246410.Q1E7Y1"/>
<dbReference type="GeneID" id="4568068"/>
<dbReference type="KEGG" id="cim:CIMG_01332"/>
<dbReference type="VEuPathDB" id="FungiDB:CIMG_01332"/>
<dbReference type="InParanoid" id="Q1E7Y1"/>
<dbReference type="OMA" id="DWPQLTI"/>
<dbReference type="OrthoDB" id="430436at2759"/>
<dbReference type="Proteomes" id="UP000001261">
    <property type="component" value="Unassembled WGS sequence"/>
</dbReference>
<dbReference type="GO" id="GO:0005741">
    <property type="term" value="C:mitochondrial outer membrane"/>
    <property type="evidence" value="ECO:0007669"/>
    <property type="project" value="UniProtKB-SubCell"/>
</dbReference>
<dbReference type="GO" id="GO:0051170">
    <property type="term" value="P:import into nucleus"/>
    <property type="evidence" value="ECO:0007669"/>
    <property type="project" value="TreeGrafter"/>
</dbReference>
<dbReference type="FunFam" id="3.40.50.720:FF:000366">
    <property type="entry name" value="Protein FMP52, mitochondrial"/>
    <property type="match status" value="1"/>
</dbReference>
<dbReference type="Gene3D" id="3.40.50.720">
    <property type="entry name" value="NAD(P)-binding Rossmann-like Domain"/>
    <property type="match status" value="1"/>
</dbReference>
<dbReference type="InterPro" id="IPR036291">
    <property type="entry name" value="NAD(P)-bd_dom_sf"/>
</dbReference>
<dbReference type="PANTHER" id="PTHR14097">
    <property type="entry name" value="OXIDOREDUCTASE HTATIP2"/>
    <property type="match status" value="1"/>
</dbReference>
<dbReference type="PANTHER" id="PTHR14097:SF7">
    <property type="entry name" value="OXIDOREDUCTASE HTATIP2"/>
    <property type="match status" value="1"/>
</dbReference>
<dbReference type="SUPFAM" id="SSF51735">
    <property type="entry name" value="NAD(P)-binding Rossmann-fold domains"/>
    <property type="match status" value="1"/>
</dbReference>
<organism>
    <name type="scientific">Coccidioides immitis (strain RS)</name>
    <name type="common">Valley fever fungus</name>
    <dbReference type="NCBI Taxonomy" id="246410"/>
    <lineage>
        <taxon>Eukaryota</taxon>
        <taxon>Fungi</taxon>
        <taxon>Dikarya</taxon>
        <taxon>Ascomycota</taxon>
        <taxon>Pezizomycotina</taxon>
        <taxon>Eurotiomycetes</taxon>
        <taxon>Eurotiomycetidae</taxon>
        <taxon>Onygenales</taxon>
        <taxon>Onygenaceae</taxon>
        <taxon>Coccidioides</taxon>
    </lineage>
</organism>
<evidence type="ECO:0000250" key="1"/>
<evidence type="ECO:0000305" key="2"/>
<protein>
    <recommendedName>
        <fullName>Protein FMP52, mitochondrial</fullName>
    </recommendedName>
</protein>
<accession>Q1E7Y1</accession>
<accession>J3KJ74</accession>
<feature type="transit peptide" description="Mitochondrion">
    <location>
        <begin position="1"/>
        <end position="37"/>
    </location>
</feature>
<feature type="chain" id="PRO_0000301820" description="Protein FMP52, mitochondrial">
    <location>
        <begin position="38"/>
        <end position="246"/>
    </location>
</feature>
<keyword id="KW-0472">Membrane</keyword>
<keyword id="KW-0496">Mitochondrion</keyword>
<keyword id="KW-1000">Mitochondrion outer membrane</keyword>
<keyword id="KW-1185">Reference proteome</keyword>
<keyword id="KW-0809">Transit peptide</keyword>
<name>FMP52_COCIM</name>
<proteinExistence type="inferred from homology"/>
<sequence length="246" mass="26256">MATTAIVGGTGLVGSNIVNILLSSPNVAHIDFLARRPPSTPVTKDLIESHPSKFASYISTDPPSSWASHLRSTSPAPEIFFSTLATTRATAGSLAAQRALEHDANVDLARAAKEAGTKVYVLVSSAGADPSSKLPYMKLKGDIEKSILDLNFEKTIILRPGFLSGQREERRIIEGMVGVIGNAAGWLSKPWLKDWWSNDAVEVARASVSAGLAALKGTEPDGQQKVRILAGKDIVRLGRTERKEAS</sequence>
<comment type="subcellular location">
    <subcellularLocation>
        <location evidence="1">Mitochondrion outer membrane</location>
        <topology evidence="1">Peripheral membrane protein</topology>
    </subcellularLocation>
</comment>
<comment type="similarity">
    <text evidence="2">Belongs to the FMP52 family.</text>
</comment>
<gene>
    <name type="primary">FMP52</name>
    <name type="ORF">CIMG_01332</name>
</gene>
<reference key="1">
    <citation type="journal article" date="2009" name="Genome Res.">
        <title>Comparative genomic analyses of the human fungal pathogens Coccidioides and their relatives.</title>
        <authorList>
            <person name="Sharpton T.J."/>
            <person name="Stajich J.E."/>
            <person name="Rounsley S.D."/>
            <person name="Gardner M.J."/>
            <person name="Wortman J.R."/>
            <person name="Jordar V.S."/>
            <person name="Maiti R."/>
            <person name="Kodira C.D."/>
            <person name="Neafsey D.E."/>
            <person name="Zeng Q."/>
            <person name="Hung C.-Y."/>
            <person name="McMahan C."/>
            <person name="Muszewska A."/>
            <person name="Grynberg M."/>
            <person name="Mandel M.A."/>
            <person name="Kellner E.M."/>
            <person name="Barker B.M."/>
            <person name="Galgiani J.N."/>
            <person name="Orbach M.J."/>
            <person name="Kirkland T.N."/>
            <person name="Cole G.T."/>
            <person name="Henn M.R."/>
            <person name="Birren B.W."/>
            <person name="Taylor J.W."/>
        </authorList>
    </citation>
    <scope>NUCLEOTIDE SEQUENCE [LARGE SCALE GENOMIC DNA]</scope>
    <source>
        <strain>RS</strain>
    </source>
</reference>
<reference key="2">
    <citation type="journal article" date="2010" name="Genome Res.">
        <title>Population genomic sequencing of Coccidioides fungi reveals recent hybridization and transposon control.</title>
        <authorList>
            <person name="Neafsey D.E."/>
            <person name="Barker B.M."/>
            <person name="Sharpton T.J."/>
            <person name="Stajich J.E."/>
            <person name="Park D.J."/>
            <person name="Whiston E."/>
            <person name="Hung C.-Y."/>
            <person name="McMahan C."/>
            <person name="White J."/>
            <person name="Sykes S."/>
            <person name="Heiman D."/>
            <person name="Young S."/>
            <person name="Zeng Q."/>
            <person name="Abouelleil A."/>
            <person name="Aftuck L."/>
            <person name="Bessette D."/>
            <person name="Brown A."/>
            <person name="FitzGerald M."/>
            <person name="Lui A."/>
            <person name="Macdonald J.P."/>
            <person name="Priest M."/>
            <person name="Orbach M.J."/>
            <person name="Galgiani J.N."/>
            <person name="Kirkland T.N."/>
            <person name="Cole G.T."/>
            <person name="Birren B.W."/>
            <person name="Henn M.R."/>
            <person name="Taylor J.W."/>
            <person name="Rounsley S.D."/>
        </authorList>
    </citation>
    <scope>GENOME REANNOTATION</scope>
    <source>
        <strain>RS</strain>
    </source>
</reference>